<feature type="signal peptide" evidence="2">
    <location>
        <begin position="1"/>
        <end position="22"/>
    </location>
</feature>
<feature type="chain" id="PRO_0000431090" description="Nuclear pore complex protein GP210">
    <location>
        <begin position="23"/>
        <end position="1923"/>
    </location>
</feature>
<feature type="transmembrane region" description="Helical" evidence="2">
    <location>
        <begin position="1829"/>
        <end position="1849"/>
    </location>
</feature>
<feature type="domain" description="BIG2" evidence="2">
    <location>
        <begin position="1152"/>
        <end position="1205"/>
    </location>
</feature>
<feature type="glycosylation site" description="N-linked (GlcNAc...) asparagine" evidence="3">
    <location>
        <position position="73"/>
    </location>
</feature>
<feature type="glycosylation site" description="N-linked (GlcNAc...) asparagine" evidence="3">
    <location>
        <position position="117"/>
    </location>
</feature>
<feature type="glycosylation site" description="N-linked (GlcNAc...) asparagine" evidence="3">
    <location>
        <position position="289"/>
    </location>
</feature>
<feature type="glycosylation site" description="N-linked (GlcNAc...) asparagine" evidence="3">
    <location>
        <position position="609"/>
    </location>
</feature>
<feature type="glycosylation site" description="N-linked (GlcNAc...) asparagine" evidence="3">
    <location>
        <position position="863"/>
    </location>
</feature>
<feature type="glycosylation site" description="N-linked (GlcNAc...) asparagine" evidence="3">
    <location>
        <position position="903"/>
    </location>
</feature>
<feature type="glycosylation site" description="N-linked (GlcNAc...) asparagine" evidence="3">
    <location>
        <position position="967"/>
    </location>
</feature>
<feature type="glycosylation site" description="N-linked (GlcNAc...) asparagine" evidence="3">
    <location>
        <position position="982"/>
    </location>
</feature>
<feature type="glycosylation site" description="N-linked (GlcNAc...) asparagine" evidence="3">
    <location>
        <position position="1171"/>
    </location>
</feature>
<feature type="glycosylation site" description="N-linked (GlcNAc...) asparagine" evidence="3">
    <location>
        <position position="1199"/>
    </location>
</feature>
<feature type="glycosylation site" description="N-linked (GlcNAc...) asparagine" evidence="3">
    <location>
        <position position="1550"/>
    </location>
</feature>
<feature type="glycosylation site" description="N-linked (GlcNAc...) asparagine" evidence="3">
    <location>
        <position position="1568"/>
    </location>
</feature>
<feature type="glycosylation site" description="N-linked (GlcNAc...) asparagine" evidence="3">
    <location>
        <position position="1743"/>
    </location>
</feature>
<proteinExistence type="evidence at protein level"/>
<keyword id="KW-0325">Glycoprotein</keyword>
<keyword id="KW-0472">Membrane</keyword>
<keyword id="KW-0509">mRNA transport</keyword>
<keyword id="KW-0906">Nuclear pore complex</keyword>
<keyword id="KW-0539">Nucleus</keyword>
<keyword id="KW-0653">Protein transport</keyword>
<keyword id="KW-1185">Reference proteome</keyword>
<keyword id="KW-0732">Signal</keyword>
<keyword id="KW-0811">Translocation</keyword>
<keyword id="KW-0812">Transmembrane</keyword>
<keyword id="KW-1133">Transmembrane helix</keyword>
<keyword id="KW-0813">Transport</keyword>
<gene>
    <name evidence="5" type="primary">GB210</name>
    <name evidence="9" type="synonym">EMB3012</name>
    <name evidence="8" type="ordered locus">At5g40480</name>
    <name evidence="10" type="ORF">K21I16.30</name>
</gene>
<organism evidence="11">
    <name type="scientific">Arabidopsis thaliana</name>
    <name type="common">Mouse-ear cress</name>
    <dbReference type="NCBI Taxonomy" id="3702"/>
    <lineage>
        <taxon>Eukaryota</taxon>
        <taxon>Viridiplantae</taxon>
        <taxon>Streptophyta</taxon>
        <taxon>Embryophyta</taxon>
        <taxon>Tracheophyta</taxon>
        <taxon>Spermatophyta</taxon>
        <taxon>Magnoliopsida</taxon>
        <taxon>eudicotyledons</taxon>
        <taxon>Gunneridae</taxon>
        <taxon>Pentapetalae</taxon>
        <taxon>rosids</taxon>
        <taxon>malvids</taxon>
        <taxon>Brassicales</taxon>
        <taxon>Brassicaceae</taxon>
        <taxon>Camelineae</taxon>
        <taxon>Arabidopsis</taxon>
    </lineage>
</organism>
<sequence>MVPVSFCFFFLLLLLSAGESSSQLVSGPHITDVNILLPPKMKNPVEYRLQGSDGCFKWSWDHHDILSVTPEFNSSSHCSTSARLRSISPYSGRKETAVYATDIQTGMVIRCKVFIDNFSRIQIFHNSIKLDLDGLSMLRVRAFDNEDNEFSSLVGLQFIWKLMPESGGSTHHLAHVPLKESPLTDCGGLCGYLDIQKKLEDSGVFADLFVVKGTKIGHEKVSVHLLEAPLTHIADEIVLTVAEAMSLEPRSPVYVLMGASFGYTLKVMRGNVPQAVDLPSPHHRWSVLNSSVAQVDSLIGLTKALSLGVTTVVVEDTRVAGHIQGSSINVVTPDTLILYISPWSMSGDLITESKPFPSSMHWYVVSGRQYLIQMKIFSGRPDAHEIYITETDDIKLYGKDSDYWKIVSLPDELSSEYGQRNSRILNAISPGLGELTSTLTYFSGHQESKEVLKVVQEIRVCEKVQFTLNSEDDTPKVLLPWTPAVYQEMELIVTGGCAKASSDYKWFTSDISILSVSAYGIIQAKRPGIATVKVVSTFDSQNFDEVIVEVSIPSSMVMLQNFPVETVVGSHLKAAVTMKALNGATFSRCDAFNSLIKWKTGSESFVIVNATSEMMMLDELRSMDSSPPCSRASIYTASTGRTVLQATLAKEFHYFDKSLSESIDLKATLTIGAYLPLSVRQDSDGNHHGGYWFDKAQEETDFGVSKLYLVPGTYVDVMLLGGPERWDDNVEFTETVKTLYEDEEDLTSRVNVHHEVDRRANMYRISCQKLGSYKLVFLRGNLLGIDHPVPAVAEALLSVHCSLPSSVVLIVDEPVNKLDVIRAASQADRAPGRLRVTPVTVANGQIIRVAAVGISEFGEAFSNSSTLSLRWELTSCNNLAYWDDDYNSKMTKSGWERFLALRNESGLCTVRATVSGIDYSFKSQYSTLLPQGSESTLTDAVRLQLVSTLRVTPEFNLVFFNPNAKVNLSMTGGSCLWEAVVNNSRVAEVIRPPSGLQCSQMMLSPKGLGTTIVTVYDIGVSPPLSALALIKVADVDWIKIASGDEISIMEGSTHSIDLLTGIDDGMTFDSSQYSLMDIMVHIEDDLVEHVTVDEDSLSVGEHVATSSFKIAARRLGITTLYVSARQQSGGKVLSQTIKVEVYSPPRLHPQGIFLVPGASYVLTIEGGPTMNVSVDYTTVDNEVAKIEKSGRLYATSPGNTTIYATIYGSEGAVICQAIGNAEVGLPATAMLVAQSDTVAVGHEMPVSPSFPEGDLLSFYELCSAYKWTIEDEKVLIFIASSINVEENAGFVNVVQGRSAGKTRVTIAFSCDFVSPGLYSESRTYEASMILSVVPDLPLSLGAPMTWVLPPFYTSSGLLPSSSEPQKHRDGQSHRGNIVYSILKDCSSRADFERDTISINGGSVKTTDSNNVACIQAKDRTSGRIEIAACVRVAEVAQIRMKSEGIPFHVIDLAVGGELELPINYYDTLGIPFLEAHGVTTYNVETNHRDVVFIKTVNDQPSAYIKGIKHGKALIRVSIGDNLRKSDYVLVSVGAHIFPQNPVIHTGNLLNFSITGADNEVTGQWFTSNRSVISVNVASGQAKAISQGSTHVTFKGHGLKLQTKVTVLFGNTIYVDSPGETLTNVHVPAEGYKFPVKFRENKFAVTEHGNKATFNCQVDPPFIGYTKPWMDLDTGNTYCLFFPYSPEHLVHSMSITKDMKPHVSFSVDASLKEARRVSGSASALLIGGFSVTGPDKLNINPDSNTTIISLVGNTDVQIHCRNKGRLSISLIKRDDFGIAGHAQYKVNVLRSEQFTDRIIITLPATGQIVEIDVCYDTGESLVASSKDGYSVLLKILWGVLVLVVSVIILMKVIDRQVPTGATGTATYSGNAAQGTPERRSGTVIYHEESPRTPSPFMEYVKRTVDETPYYRREGRRRFNPQNTM</sequence>
<protein>
    <recommendedName>
        <fullName evidence="5">Nuclear pore complex protein GP210</fullName>
    </recommendedName>
    <alternativeName>
        <fullName evidence="1">Nuclear pore membrane glycoprotein 210</fullName>
    </alternativeName>
    <alternativeName>
        <fullName>Nucleoporin GP210</fullName>
    </alternativeName>
    <alternativeName>
        <fullName evidence="9">Protein EMBRYO DEFECTIVE 3012</fullName>
    </alternativeName>
</protein>
<comment type="subunit">
    <text evidence="7">Part of the nuclear pore complex (NPC). The NPC has an eight-fold symmetrical structure comprising a central transport channel and two rings, the cytoplasmic and nuclear rings, to which eight filaments are attached. The cytoplasmic filaments have loose ends, while the nuclear filaments are joined in a distal ring, forming a nuclear basket. NPCs are highly dynamic in configuration and composition, and can be devided in 3 subcomplexes, the NUP62 subcomplex, the NUP107-160 subcomplex and the NUP93 subcomplex, containing approximately 30 different nucleoporin proteins.</text>
</comment>
<comment type="subcellular location">
    <subcellularLocation>
        <location evidence="4">Nucleus envelope</location>
    </subcellularLocation>
    <subcellularLocation>
        <location evidence="2">Nucleus membrane</location>
        <topology evidence="2">Single-pass membrane protein</topology>
    </subcellularLocation>
    <subcellularLocation>
        <location evidence="7">Nucleus</location>
        <location evidence="7">Nuclear pore complex</location>
    </subcellularLocation>
</comment>
<comment type="similarity">
    <text evidence="6">Belongs to the NUP210 family.</text>
</comment>
<comment type="sequence caution" evidence="6">
    <conflict type="erroneous gene model prediction">
        <sequence resource="EMBL-CDS" id="BAB10497"/>
    </conflict>
</comment>
<evidence type="ECO:0000250" key="1">
    <source>
        <dbReference type="UniProtKB" id="Q8TEM1"/>
    </source>
</evidence>
<evidence type="ECO:0000255" key="2"/>
<evidence type="ECO:0000255" key="3">
    <source>
        <dbReference type="PROSITE-ProRule" id="PRU00498"/>
    </source>
</evidence>
<evidence type="ECO:0000269" key="4">
    <source>
    </source>
</evidence>
<evidence type="ECO:0000303" key="5">
    <source>
    </source>
</evidence>
<evidence type="ECO:0000305" key="6"/>
<evidence type="ECO:0000305" key="7">
    <source>
    </source>
</evidence>
<evidence type="ECO:0000312" key="8">
    <source>
        <dbReference type="Araport" id="AT5G40480"/>
    </source>
</evidence>
<evidence type="ECO:0000312" key="9">
    <source>
        <dbReference type="EMBL" id="AED94552.1"/>
    </source>
</evidence>
<evidence type="ECO:0000312" key="10">
    <source>
        <dbReference type="EMBL" id="BAB10497.1"/>
    </source>
</evidence>
<evidence type="ECO:0000312" key="11">
    <source>
        <dbReference type="Proteomes" id="UP000006548"/>
    </source>
</evidence>
<accession>F4KHD8</accession>
<accession>Q9FI62</accession>
<reference key="1">
    <citation type="journal article" date="1999" name="DNA Res.">
        <title>Structural analysis of Arabidopsis thaliana chromosome 5. IX. Sequence features of the regions of 1,011,550 bp covered by seventeen P1 and TAC clones.</title>
        <authorList>
            <person name="Kaneko T."/>
            <person name="Katoh T."/>
            <person name="Sato S."/>
            <person name="Nakamura Y."/>
            <person name="Asamizu E."/>
            <person name="Kotani H."/>
            <person name="Miyajima N."/>
            <person name="Tabata S."/>
        </authorList>
    </citation>
    <scope>NUCLEOTIDE SEQUENCE [LARGE SCALE GENOMIC DNA]</scope>
    <source>
        <strain>cv. Columbia</strain>
    </source>
</reference>
<reference key="2">
    <citation type="journal article" date="2017" name="Plant J.">
        <title>Araport11: a complete reannotation of the Arabidopsis thaliana reference genome.</title>
        <authorList>
            <person name="Cheng C.Y."/>
            <person name="Krishnakumar V."/>
            <person name="Chan A.P."/>
            <person name="Thibaud-Nissen F."/>
            <person name="Schobel S."/>
            <person name="Town C.D."/>
        </authorList>
    </citation>
    <scope>GENOME REANNOTATION</scope>
    <source>
        <strain>cv. Columbia</strain>
    </source>
</reference>
<reference key="3">
    <citation type="journal article" date="2010" name="Plant Cell">
        <title>Identification and characterization of nuclear pore complex components in Arabidopsis thaliana.</title>
        <authorList>
            <person name="Tamura K."/>
            <person name="Fukao Y."/>
            <person name="Iwamoto M."/>
            <person name="Haraguchi T."/>
            <person name="Hara-Nishimura I."/>
        </authorList>
    </citation>
    <scope>IDENTIFICATION IN THE NUCLEAR PORE COMPLEX BY MASS SPECTROMETRY</scope>
    <scope>SUBCELLULAR LOCATION</scope>
    <scope>NOMENCLATURE</scope>
</reference>
<dbReference type="EMBL" id="AB017062">
    <property type="protein sequence ID" value="BAB10497.1"/>
    <property type="status" value="ALT_SEQ"/>
    <property type="molecule type" value="Genomic_DNA"/>
</dbReference>
<dbReference type="EMBL" id="CP002688">
    <property type="protein sequence ID" value="AED94552.1"/>
    <property type="molecule type" value="Genomic_DNA"/>
</dbReference>
<dbReference type="RefSeq" id="NP_198864.2">
    <property type="nucleotide sequence ID" value="NM_123412.4"/>
</dbReference>
<dbReference type="SMR" id="F4KHD8"/>
<dbReference type="BioGRID" id="19297">
    <property type="interactions" value="5"/>
</dbReference>
<dbReference type="FunCoup" id="F4KHD8">
    <property type="interactions" value="2127"/>
</dbReference>
<dbReference type="STRING" id="3702.F4KHD8"/>
<dbReference type="GlyCosmos" id="F4KHD8">
    <property type="glycosylation" value="13 sites, No reported glycans"/>
</dbReference>
<dbReference type="GlyGen" id="F4KHD8">
    <property type="glycosylation" value="13 sites"/>
</dbReference>
<dbReference type="iPTMnet" id="F4KHD8"/>
<dbReference type="PaxDb" id="3702-AT5G40480.1"/>
<dbReference type="ProteomicsDB" id="248457"/>
<dbReference type="EnsemblPlants" id="AT5G40480.1">
    <property type="protein sequence ID" value="AT5G40480.1"/>
    <property type="gene ID" value="AT5G40480"/>
</dbReference>
<dbReference type="GeneID" id="834046"/>
<dbReference type="Gramene" id="AT5G40480.1">
    <property type="protein sequence ID" value="AT5G40480.1"/>
    <property type="gene ID" value="AT5G40480"/>
</dbReference>
<dbReference type="KEGG" id="ath:AT5G40480"/>
<dbReference type="Araport" id="AT5G40480"/>
<dbReference type="TAIR" id="AT5G40480">
    <property type="gene designation" value="EMB3012"/>
</dbReference>
<dbReference type="eggNOG" id="KOG1833">
    <property type="taxonomic scope" value="Eukaryota"/>
</dbReference>
<dbReference type="HOGENOM" id="CLU_001205_1_1_1"/>
<dbReference type="InParanoid" id="F4KHD8"/>
<dbReference type="OMA" id="HNMYEGT"/>
<dbReference type="CD-CODE" id="4299E36E">
    <property type="entry name" value="Nucleolus"/>
</dbReference>
<dbReference type="PRO" id="PR:F4KHD8"/>
<dbReference type="Proteomes" id="UP000006548">
    <property type="component" value="Chromosome 5"/>
</dbReference>
<dbReference type="ExpressionAtlas" id="F4KHD8">
    <property type="expression patterns" value="baseline and differential"/>
</dbReference>
<dbReference type="GO" id="GO:0005783">
    <property type="term" value="C:endoplasmic reticulum"/>
    <property type="evidence" value="ECO:0007005"/>
    <property type="project" value="TAIR"/>
</dbReference>
<dbReference type="GO" id="GO:0005635">
    <property type="term" value="C:nuclear envelope"/>
    <property type="evidence" value="ECO:0000314"/>
    <property type="project" value="TAIR"/>
</dbReference>
<dbReference type="GO" id="GO:0031965">
    <property type="term" value="C:nuclear membrane"/>
    <property type="evidence" value="ECO:0007669"/>
    <property type="project" value="UniProtKB-SubCell"/>
</dbReference>
<dbReference type="GO" id="GO:0005643">
    <property type="term" value="C:nuclear pore"/>
    <property type="evidence" value="ECO:0007669"/>
    <property type="project" value="UniProtKB-SubCell"/>
</dbReference>
<dbReference type="GO" id="GO:0051028">
    <property type="term" value="P:mRNA transport"/>
    <property type="evidence" value="ECO:0007669"/>
    <property type="project" value="UniProtKB-KW"/>
</dbReference>
<dbReference type="GO" id="GO:0015031">
    <property type="term" value="P:protein transport"/>
    <property type="evidence" value="ECO:0007669"/>
    <property type="project" value="UniProtKB-KW"/>
</dbReference>
<dbReference type="Gene3D" id="2.60.40.1080">
    <property type="match status" value="1"/>
</dbReference>
<dbReference type="InterPro" id="IPR003343">
    <property type="entry name" value="Big_2"/>
</dbReference>
<dbReference type="InterPro" id="IPR056232">
    <property type="entry name" value="Ig_GP210_15th"/>
</dbReference>
<dbReference type="InterPro" id="IPR056233">
    <property type="entry name" value="Ig_GP210_16th"/>
</dbReference>
<dbReference type="InterPro" id="IPR008964">
    <property type="entry name" value="Invasin/intimin_cell_adhesion"/>
</dbReference>
<dbReference type="InterPro" id="IPR045197">
    <property type="entry name" value="NUP210-like"/>
</dbReference>
<dbReference type="InterPro" id="IPR055096">
    <property type="entry name" value="NUP210_Ig1"/>
</dbReference>
<dbReference type="InterPro" id="IPR055097">
    <property type="entry name" value="NUP210_Ig2"/>
</dbReference>
<dbReference type="InterPro" id="IPR055099">
    <property type="entry name" value="NUP210_Ig7"/>
</dbReference>
<dbReference type="PANTHER" id="PTHR23019:SF0">
    <property type="entry name" value="NUCLEAR PORE MEMBRANE GLYCOPROTEIN 210"/>
    <property type="match status" value="1"/>
</dbReference>
<dbReference type="PANTHER" id="PTHR23019">
    <property type="entry name" value="NUCLEAR PORE MEMBRANE GLYCOPROTEIN GP210-RELATED"/>
    <property type="match status" value="1"/>
</dbReference>
<dbReference type="Pfam" id="PF24425">
    <property type="entry name" value="Ig_GP210_15th"/>
    <property type="match status" value="1"/>
</dbReference>
<dbReference type="Pfam" id="PF24427">
    <property type="entry name" value="Ig_GP210_16th"/>
    <property type="match status" value="1"/>
</dbReference>
<dbReference type="Pfam" id="PF22967">
    <property type="entry name" value="Ig_NUP210_1st"/>
    <property type="match status" value="1"/>
</dbReference>
<dbReference type="Pfam" id="PF22969">
    <property type="entry name" value="Ig_NUP210_2nd"/>
    <property type="match status" value="1"/>
</dbReference>
<dbReference type="Pfam" id="PF22962">
    <property type="entry name" value="Ig_NUP210_7th"/>
    <property type="match status" value="1"/>
</dbReference>
<dbReference type="SMART" id="SM00635">
    <property type="entry name" value="BID_2"/>
    <property type="match status" value="3"/>
</dbReference>
<dbReference type="SUPFAM" id="SSF49373">
    <property type="entry name" value="Invasin/intimin cell-adhesion fragments"/>
    <property type="match status" value="1"/>
</dbReference>
<name>GP210_ARATH</name>